<sequence length="272" mass="29275">MTREIAIGNVKMGGSRPLVLIAGPCVIENETATLRCAERLMTIVNGLSIPLIFKASYDKANRTSVTAFRGPGLKEGLRILAKVKESLGLPVISDIHSIEQVQPAAEVLDILQIPAFLCRQTDLLVEAARTGCVVNVKKGQFLAPWDMENVVGKIVASGNERIILTERGASFGYNNLVSDMRSLPIMRRFGFPVVFDATHSVQLPGGQGGSSGGQREFVEYLSRAAVATGIDGVFLEVHEEPDKALCDGPNSVPLDDLPVLLKKLKAIDAIVK</sequence>
<organism>
    <name type="scientific">Geobacter metallireducens (strain ATCC 53774 / DSM 7210 / GS-15)</name>
    <dbReference type="NCBI Taxonomy" id="269799"/>
    <lineage>
        <taxon>Bacteria</taxon>
        <taxon>Pseudomonadati</taxon>
        <taxon>Thermodesulfobacteriota</taxon>
        <taxon>Desulfuromonadia</taxon>
        <taxon>Geobacterales</taxon>
        <taxon>Geobacteraceae</taxon>
        <taxon>Geobacter</taxon>
    </lineage>
</organism>
<reference key="1">
    <citation type="journal article" date="2009" name="BMC Microbiol.">
        <title>The genome sequence of Geobacter metallireducens: features of metabolism, physiology and regulation common and dissimilar to Geobacter sulfurreducens.</title>
        <authorList>
            <person name="Aklujkar M."/>
            <person name="Krushkal J."/>
            <person name="DiBartolo G."/>
            <person name="Lapidus A."/>
            <person name="Land M.L."/>
            <person name="Lovley D.R."/>
        </authorList>
    </citation>
    <scope>NUCLEOTIDE SEQUENCE [LARGE SCALE GENOMIC DNA]</scope>
    <source>
        <strain>ATCC 53774 / DSM 7210 / GS-15</strain>
    </source>
</reference>
<keyword id="KW-0963">Cytoplasm</keyword>
<keyword id="KW-0448">Lipopolysaccharide biosynthesis</keyword>
<keyword id="KW-1185">Reference proteome</keyword>
<keyword id="KW-0808">Transferase</keyword>
<feature type="chain" id="PRO_0000304451" description="2-dehydro-3-deoxyphosphooctonate aldolase">
    <location>
        <begin position="1"/>
        <end position="272"/>
    </location>
</feature>
<accession>Q39W61</accession>
<dbReference type="EC" id="2.5.1.55" evidence="1"/>
<dbReference type="EMBL" id="CP000148">
    <property type="protein sequence ID" value="ABB31513.1"/>
    <property type="molecule type" value="Genomic_DNA"/>
</dbReference>
<dbReference type="RefSeq" id="WP_004512090.1">
    <property type="nucleotide sequence ID" value="NC_007517.1"/>
</dbReference>
<dbReference type="SMR" id="Q39W61"/>
<dbReference type="STRING" id="269799.Gmet_1277"/>
<dbReference type="KEGG" id="gme:Gmet_1277"/>
<dbReference type="eggNOG" id="COG2877">
    <property type="taxonomic scope" value="Bacteria"/>
</dbReference>
<dbReference type="HOGENOM" id="CLU_036666_0_0_7"/>
<dbReference type="UniPathway" id="UPA00030"/>
<dbReference type="UniPathway" id="UPA00357">
    <property type="reaction ID" value="UER00474"/>
</dbReference>
<dbReference type="Proteomes" id="UP000007073">
    <property type="component" value="Chromosome"/>
</dbReference>
<dbReference type="GO" id="GO:0005737">
    <property type="term" value="C:cytoplasm"/>
    <property type="evidence" value="ECO:0007669"/>
    <property type="project" value="UniProtKB-SubCell"/>
</dbReference>
<dbReference type="GO" id="GO:0008676">
    <property type="term" value="F:3-deoxy-8-phosphooctulonate synthase activity"/>
    <property type="evidence" value="ECO:0007669"/>
    <property type="project" value="UniProtKB-UniRule"/>
</dbReference>
<dbReference type="GO" id="GO:0019294">
    <property type="term" value="P:keto-3-deoxy-D-manno-octulosonic acid biosynthetic process"/>
    <property type="evidence" value="ECO:0007669"/>
    <property type="project" value="UniProtKB-UniRule"/>
</dbReference>
<dbReference type="Gene3D" id="3.20.20.70">
    <property type="entry name" value="Aldolase class I"/>
    <property type="match status" value="1"/>
</dbReference>
<dbReference type="HAMAP" id="MF_00056">
    <property type="entry name" value="KDO8P_synth"/>
    <property type="match status" value="1"/>
</dbReference>
<dbReference type="InterPro" id="IPR013785">
    <property type="entry name" value="Aldolase_TIM"/>
</dbReference>
<dbReference type="InterPro" id="IPR006218">
    <property type="entry name" value="DAHP1/KDSA"/>
</dbReference>
<dbReference type="InterPro" id="IPR006269">
    <property type="entry name" value="KDO8P_synthase"/>
</dbReference>
<dbReference type="NCBIfam" id="TIGR01362">
    <property type="entry name" value="KDO8P_synth"/>
    <property type="match status" value="1"/>
</dbReference>
<dbReference type="NCBIfam" id="NF003543">
    <property type="entry name" value="PRK05198.1"/>
    <property type="match status" value="1"/>
</dbReference>
<dbReference type="PANTHER" id="PTHR21057">
    <property type="entry name" value="PHOSPHO-2-DEHYDRO-3-DEOXYHEPTONATE ALDOLASE"/>
    <property type="match status" value="1"/>
</dbReference>
<dbReference type="Pfam" id="PF00793">
    <property type="entry name" value="DAHP_synth_1"/>
    <property type="match status" value="1"/>
</dbReference>
<dbReference type="SUPFAM" id="SSF51569">
    <property type="entry name" value="Aldolase"/>
    <property type="match status" value="1"/>
</dbReference>
<proteinExistence type="inferred from homology"/>
<protein>
    <recommendedName>
        <fullName evidence="1">2-dehydro-3-deoxyphosphooctonate aldolase</fullName>
        <ecNumber evidence="1">2.5.1.55</ecNumber>
    </recommendedName>
    <alternativeName>
        <fullName evidence="1">3-deoxy-D-manno-octulosonic acid 8-phosphate synthase</fullName>
    </alternativeName>
    <alternativeName>
        <fullName evidence="1">KDO-8-phosphate synthase</fullName>
        <shortName evidence="1">KDO 8-P synthase</shortName>
        <shortName evidence="1">KDOPS</shortName>
    </alternativeName>
    <alternativeName>
        <fullName evidence="1">Phospho-2-dehydro-3-deoxyoctonate aldolase</fullName>
    </alternativeName>
</protein>
<comment type="catalytic activity">
    <reaction evidence="1">
        <text>D-arabinose 5-phosphate + phosphoenolpyruvate + H2O = 3-deoxy-alpha-D-manno-2-octulosonate-8-phosphate + phosphate</text>
        <dbReference type="Rhea" id="RHEA:14053"/>
        <dbReference type="ChEBI" id="CHEBI:15377"/>
        <dbReference type="ChEBI" id="CHEBI:43474"/>
        <dbReference type="ChEBI" id="CHEBI:57693"/>
        <dbReference type="ChEBI" id="CHEBI:58702"/>
        <dbReference type="ChEBI" id="CHEBI:85985"/>
        <dbReference type="EC" id="2.5.1.55"/>
    </reaction>
</comment>
<comment type="pathway">
    <text evidence="1">Carbohydrate biosynthesis; 3-deoxy-D-manno-octulosonate biosynthesis; 3-deoxy-D-manno-octulosonate from D-ribulose 5-phosphate: step 2/3.</text>
</comment>
<comment type="pathway">
    <text evidence="1">Bacterial outer membrane biogenesis; lipopolysaccharide biosynthesis.</text>
</comment>
<comment type="subcellular location">
    <subcellularLocation>
        <location evidence="1">Cytoplasm</location>
    </subcellularLocation>
</comment>
<comment type="similarity">
    <text evidence="1">Belongs to the KdsA family.</text>
</comment>
<gene>
    <name evidence="1" type="primary">kdsA</name>
    <name type="ordered locus">Gmet_1277</name>
</gene>
<name>KDSA_GEOMG</name>
<evidence type="ECO:0000255" key="1">
    <source>
        <dbReference type="HAMAP-Rule" id="MF_00056"/>
    </source>
</evidence>